<feature type="chain" id="PRO_0000116099" description="Tegument protein UL51">
    <location>
        <begin position="1"/>
        <end position="244"/>
    </location>
</feature>
<feature type="region of interest" description="Disordered" evidence="2">
    <location>
        <begin position="178"/>
        <end position="244"/>
    </location>
</feature>
<feature type="compositionally biased region" description="Low complexity" evidence="2">
    <location>
        <begin position="221"/>
        <end position="244"/>
    </location>
</feature>
<feature type="lipid moiety-binding region" description="S-palmitoyl cysteine; by host" evidence="3">
    <location>
        <position position="9"/>
    </location>
</feature>
<feature type="sequence variant" description="In strain: Nonneuroinvasive mutant HF10 and 17 syn+.">
    <original>F</original>
    <variation>L</variation>
    <location>
        <position position="92"/>
    </location>
</feature>
<feature type="mutagenesis site" description="Loss of cytoplasmic viral assembly center maintenance." evidence="8">
    <original>Y</original>
    <variation>A</variation>
    <location>
        <position position="19"/>
    </location>
</feature>
<comment type="function">
    <text evidence="4 8">Plays several roles during the time course of infection, including egress of virus particles from the perinuclear space and secondary envelopment of cytoplasmic capsids that bud into specific trans-Golgi network (TGN)-derived membranes (PubMed:15890934). Plays also an essential role in the maintenance of host cytoplasmic viral assembly center (cVAC) morphology in primary host neuronal cells (PubMed:32699089).</text>
</comment>
<comment type="subunit">
    <text evidence="1 6 7">Oligomerizes. Interacts with UL7; this interaction mediates UL7 incorporation to virions. Interacts with UL14 (PubMed:27440890).</text>
</comment>
<comment type="subcellular location">
    <subcellularLocation>
        <location evidence="5 8">Virion tegument</location>
    </subcellularLocation>
    <subcellularLocation>
        <location evidence="3 8">Host cytoplasm</location>
    </subcellularLocation>
    <subcellularLocation>
        <location evidence="3">Host Golgi apparatus</location>
    </subcellularLocation>
    <text evidence="8">Localizes to cytoplasmic viral assembly center (cVAC) where capsid envelopment occurs.</text>
</comment>
<comment type="PTM">
    <text evidence="9">Phosphorylated.</text>
</comment>
<comment type="PTM">
    <text evidence="3">Palmitoylation is necessary for Golgi localization.</text>
</comment>
<comment type="similarity">
    <text evidence="10">Belongs to the herpesviridae UL51 family.</text>
</comment>
<name>TEG7_HHV11</name>
<evidence type="ECO:0000250" key="1">
    <source>
        <dbReference type="UniProtKB" id="P16823"/>
    </source>
</evidence>
<evidence type="ECO:0000256" key="2">
    <source>
        <dbReference type="SAM" id="MobiDB-lite"/>
    </source>
</evidence>
<evidence type="ECO:0000269" key="3">
    <source>
    </source>
</evidence>
<evidence type="ECO:0000269" key="4">
    <source>
    </source>
</evidence>
<evidence type="ECO:0000269" key="5">
    <source>
    </source>
</evidence>
<evidence type="ECO:0000269" key="6">
    <source>
    </source>
</evidence>
<evidence type="ECO:0000269" key="7">
    <source>
    </source>
</evidence>
<evidence type="ECO:0000269" key="8">
    <source>
    </source>
</evidence>
<evidence type="ECO:0000269" key="9">
    <source>
    </source>
</evidence>
<evidence type="ECO:0000305" key="10"/>
<protein>
    <recommendedName>
        <fullName>Tegument protein UL51</fullName>
    </recommendedName>
</protein>
<organismHost>
    <name type="scientific">Homo sapiens</name>
    <name type="common">Human</name>
    <dbReference type="NCBI Taxonomy" id="9606"/>
</organismHost>
<organism>
    <name type="scientific">Human herpesvirus 1 (strain 17)</name>
    <name type="common">HHV-1</name>
    <name type="synonym">Human herpes simplex virus 1</name>
    <dbReference type="NCBI Taxonomy" id="10299"/>
    <lineage>
        <taxon>Viruses</taxon>
        <taxon>Duplodnaviria</taxon>
        <taxon>Heunggongvirae</taxon>
        <taxon>Peploviricota</taxon>
        <taxon>Herviviricetes</taxon>
        <taxon>Herpesvirales</taxon>
        <taxon>Orthoherpesviridae</taxon>
        <taxon>Alphaherpesvirinae</taxon>
        <taxon>Simplexvirus</taxon>
        <taxon>Simplexvirus humanalpha1</taxon>
        <taxon>Human herpesvirus 1</taxon>
    </lineage>
</organism>
<keyword id="KW-1035">Host cytoplasm</keyword>
<keyword id="KW-1040">Host Golgi apparatus</keyword>
<keyword id="KW-0449">Lipoprotein</keyword>
<keyword id="KW-0564">Palmitate</keyword>
<keyword id="KW-0597">Phosphoprotein</keyword>
<keyword id="KW-1185">Reference proteome</keyword>
<keyword id="KW-0946">Virion</keyword>
<keyword id="KW-0920">Virion tegument</keyword>
<accession>P10235</accession>
<accession>Q09I83</accession>
<sequence>MASLLGAICGWGARPEEQYEMIRAAVPPSEAEPRLQEALAVVNALLPAPITLDDALGSLDDTRRLVKARALARTYHACMVNLERLARHHPGFEAPTIDGAVAAHQDKMRRLADTCMATILQMYMSVGAADKSADVLVSQAIRSMAESDVVMEDVAIAERALGLSAFGVAGGTRSGGIGVTEAPSLGHPHTPPPEVTLAPAARNGDALPDPKPESCPRVSVPRPTASPTAPRPGPSRAAPCVLGQ</sequence>
<gene>
    <name type="ORF">UL51</name>
</gene>
<proteinExistence type="evidence at protein level"/>
<reference key="1">
    <citation type="journal article" date="1988" name="J. Gen. Virol.">
        <title>The complete DNA sequence of the long unique region in the genome of herpes simplex virus type 1.</title>
        <authorList>
            <person name="McGeoch D.J."/>
            <person name="Dalrymple M.A."/>
            <person name="Davison A.J."/>
            <person name="Dolan A."/>
            <person name="Frame M.C."/>
            <person name="McNab D."/>
            <person name="Perry L.J."/>
            <person name="Scott J.E."/>
            <person name="Taylor P."/>
        </authorList>
    </citation>
    <scope>NUCLEOTIDE SEQUENCE [LARGE SCALE GENOMIC DNA]</scope>
</reference>
<reference key="2">
    <citation type="journal article" date="2007" name="Microbes Infect.">
        <title>Determination and analysis of the DNA sequence of highly attenuated herpes simplex virus type 1 mutant HF10, a potential oncolytic virus.</title>
        <authorList>
            <person name="Ushijima Y."/>
            <person name="Luo C."/>
            <person name="Goshima F."/>
            <person name="Yamauchi Y."/>
            <person name="Kimura H."/>
            <person name="Nishiyama Y."/>
        </authorList>
    </citation>
    <scope>NUCLEOTIDE SEQUENCE [LARGE SCALE GENOMIC DNA]</scope>
    <source>
        <strain>Nonneuroinvasive mutant HF10</strain>
    </source>
</reference>
<reference key="3">
    <citation type="submission" date="2008-12" db="EMBL/GenBank/DDBJ databases">
        <title>Herpes simplex virus type 1 bacterial artificial chromosome.</title>
        <authorList>
            <person name="Cunningham C."/>
            <person name="Davison A.J."/>
        </authorList>
    </citation>
    <scope>NUCLEOTIDE SEQUENCE [LARGE SCALE GENOMIC DNA]</scope>
    <source>
        <strain>17 syn+</strain>
    </source>
</reference>
<reference key="4">
    <citation type="journal article" date="1988" name="J. Virol.">
        <title>Structures of herpes simplex virus type 1 genes required for replication of virus DNA.</title>
        <authorList>
            <person name="McGeoch D.J."/>
            <person name="Dalrymple M.A."/>
            <person name="Dolan A."/>
            <person name="McNab D."/>
            <person name="Perry L.J."/>
            <person name="Taylor P."/>
            <person name="Challberg M.D."/>
        </authorList>
    </citation>
    <scope>NUCLEOTIDE SEQUENCE [GENOMIC DNA] OF 1-68</scope>
</reference>
<reference key="5">
    <citation type="journal article" date="1998" name="J. Gen. Virol.">
        <title>Identification and characterization of the herpes simplex virus type 1 UL51 gene product.</title>
        <authorList>
            <person name="Daikoku T."/>
            <person name="Ikenoya K."/>
            <person name="Yamada H."/>
            <person name="Goshima F."/>
            <person name="Nishiyama Y."/>
        </authorList>
    </citation>
    <scope>PHOSPHORYLATION</scope>
</reference>
<reference key="6">
    <citation type="journal article" date="2003" name="J. Virol.">
        <title>Subcellular localization of herpes simplex virus type 1 UL51 protein and role of palmitoylation in Golgi apparatus targeting.</title>
        <authorList>
            <person name="Nozawa N."/>
            <person name="Daikoku T."/>
            <person name="Koshizuka T."/>
            <person name="Yamauchi Y."/>
            <person name="Yoshikawa T."/>
            <person name="Nishiyama Y."/>
        </authorList>
    </citation>
    <scope>SUBCELLULAR LOCATION</scope>
    <scope>PALMITOYLATION AT CYS-9</scope>
    <source>
        <strain>KOS</strain>
    </source>
</reference>
<reference key="7">
    <citation type="journal article" date="2005" name="J. Virol.">
        <title>Herpes simplex virus type 1 UL51 protein is involved in maturation and egress of virus particles.</title>
        <authorList>
            <person name="Nozawa N."/>
            <person name="Kawaguchi Y."/>
            <person name="Tanaka M."/>
            <person name="Kato A."/>
            <person name="Kato A."/>
            <person name="Kimura H."/>
            <person name="Nishiyama Y."/>
        </authorList>
    </citation>
    <scope>FUNCTION</scope>
</reference>
<reference key="8">
    <citation type="journal article" date="2008" name="J. Virol.">
        <title>Comprehensive characterization of extracellular herpes simplex virus type 1 virions.</title>
        <authorList>
            <person name="Loret S."/>
            <person name="Guay G."/>
            <person name="Lippe R."/>
        </authorList>
    </citation>
    <scope>SUBCELLULAR LOCATION</scope>
    <source>
        <strain>F</strain>
    </source>
</reference>
<reference key="9">
    <citation type="journal article" date="2015" name="J. Virol.">
        <title>The HSV-1 UL51 protein interacts with the UL7 protein and plays a role in its recruitment into the virion.</title>
        <authorList>
            <person name="Roller R.J."/>
            <person name="Fetters R."/>
        </authorList>
    </citation>
    <scope>INTERACTION WITH UL7</scope>
    <scope>SUBCELLULAR LOCATION</scope>
</reference>
<reference key="10">
    <citation type="journal article" date="2016" name="J. Virol.">
        <title>The interaction between Herpes Simplex Virus 1 tegument proteins UL51 and UL14 and its role in virion morphogenesis.</title>
        <authorList>
            <person name="Oda S."/>
            <person name="Arii J."/>
            <person name="Koyanagi N."/>
            <person name="Kato A."/>
            <person name="Kawaguchi Y."/>
        </authorList>
    </citation>
    <scope>INTERACTION WITH UL14</scope>
</reference>
<reference key="11">
    <citation type="journal article" date="2020" name="J. Virol.">
        <title>Herpes Simplex Virus Organizes Cytoplasmic Membranes To Form a Viral Assembly Center in Neuronal Cells.</title>
        <authorList>
            <person name="White S."/>
            <person name="Kawano H."/>
            <person name="Harata N.C."/>
            <person name="Roller R.J."/>
        </authorList>
    </citation>
    <scope>FUNCTION</scope>
    <scope>SUBCELLULAR LOCATION</scope>
    <scope>MUTAGENESIS OF TYR-19</scope>
</reference>
<dbReference type="EMBL" id="X14112">
    <property type="protein sequence ID" value="CAA32302.1"/>
    <property type="molecule type" value="Genomic_DNA"/>
</dbReference>
<dbReference type="EMBL" id="AH002360">
    <property type="protein sequence ID" value="AAA45825.2"/>
    <property type="molecule type" value="Genomic_DNA"/>
</dbReference>
<dbReference type="EMBL" id="DQ889502">
    <property type="protein sequence ID" value="ABI63512.1"/>
    <property type="molecule type" value="Genomic_DNA"/>
</dbReference>
<dbReference type="EMBL" id="FJ593289">
    <property type="protein sequence ID" value="ACM62275.1"/>
    <property type="molecule type" value="Genomic_DNA"/>
</dbReference>
<dbReference type="PIR" id="F30089">
    <property type="entry name" value="WMBEY1"/>
</dbReference>
<dbReference type="RefSeq" id="YP_009137127.1">
    <property type="nucleotide sequence ID" value="NC_001806.2"/>
</dbReference>
<dbReference type="SMR" id="P10235"/>
<dbReference type="BioGRID" id="971448">
    <property type="interactions" value="2"/>
</dbReference>
<dbReference type="iPTMnet" id="P10235"/>
<dbReference type="DNASU" id="2703422"/>
<dbReference type="GeneID" id="2703422"/>
<dbReference type="KEGG" id="vg:2703422"/>
<dbReference type="Proteomes" id="UP000009294">
    <property type="component" value="Segment"/>
</dbReference>
<dbReference type="Proteomes" id="UP000180652">
    <property type="component" value="Segment"/>
</dbReference>
<dbReference type="GO" id="GO:0044177">
    <property type="term" value="C:host cell Golgi apparatus"/>
    <property type="evidence" value="ECO:0007669"/>
    <property type="project" value="UniProtKB-SubCell"/>
</dbReference>
<dbReference type="GO" id="GO:0019033">
    <property type="term" value="C:viral tegument"/>
    <property type="evidence" value="ECO:0007669"/>
    <property type="project" value="UniProtKB-SubCell"/>
</dbReference>
<dbReference type="InterPro" id="IPR007625">
    <property type="entry name" value="Herpes_UL51"/>
</dbReference>
<dbReference type="Pfam" id="PF04540">
    <property type="entry name" value="Herpes_UL51"/>
    <property type="match status" value="1"/>
</dbReference>